<organism>
    <name type="scientific">Xanthomonas campestris pv. campestris (strain 8004)</name>
    <dbReference type="NCBI Taxonomy" id="314565"/>
    <lineage>
        <taxon>Bacteria</taxon>
        <taxon>Pseudomonadati</taxon>
        <taxon>Pseudomonadota</taxon>
        <taxon>Gammaproteobacteria</taxon>
        <taxon>Lysobacterales</taxon>
        <taxon>Lysobacteraceae</taxon>
        <taxon>Xanthomonas</taxon>
    </lineage>
</organism>
<gene>
    <name evidence="1" type="primary">rplI</name>
    <name type="ordered locus">XC_2669</name>
</gene>
<feature type="chain" id="PRO_0000236621" description="Large ribosomal subunit protein bL9">
    <location>
        <begin position="1"/>
        <end position="149"/>
    </location>
</feature>
<dbReference type="EMBL" id="CP000050">
    <property type="protein sequence ID" value="AAY49718.1"/>
    <property type="molecule type" value="Genomic_DNA"/>
</dbReference>
<dbReference type="RefSeq" id="WP_005991240.1">
    <property type="nucleotide sequence ID" value="NZ_CP155948.1"/>
</dbReference>
<dbReference type="SMR" id="Q4UTA5"/>
<dbReference type="GeneID" id="58013843"/>
<dbReference type="KEGG" id="xcb:XC_2669"/>
<dbReference type="HOGENOM" id="CLU_078938_4_1_6"/>
<dbReference type="Proteomes" id="UP000000420">
    <property type="component" value="Chromosome"/>
</dbReference>
<dbReference type="GO" id="GO:1990904">
    <property type="term" value="C:ribonucleoprotein complex"/>
    <property type="evidence" value="ECO:0007669"/>
    <property type="project" value="UniProtKB-KW"/>
</dbReference>
<dbReference type="GO" id="GO:0005840">
    <property type="term" value="C:ribosome"/>
    <property type="evidence" value="ECO:0007669"/>
    <property type="project" value="UniProtKB-KW"/>
</dbReference>
<dbReference type="GO" id="GO:0019843">
    <property type="term" value="F:rRNA binding"/>
    <property type="evidence" value="ECO:0007669"/>
    <property type="project" value="UniProtKB-UniRule"/>
</dbReference>
<dbReference type="GO" id="GO:0003735">
    <property type="term" value="F:structural constituent of ribosome"/>
    <property type="evidence" value="ECO:0007669"/>
    <property type="project" value="InterPro"/>
</dbReference>
<dbReference type="GO" id="GO:0006412">
    <property type="term" value="P:translation"/>
    <property type="evidence" value="ECO:0007669"/>
    <property type="project" value="UniProtKB-UniRule"/>
</dbReference>
<dbReference type="FunFam" id="3.10.430.100:FF:000007">
    <property type="entry name" value="50S ribosomal protein L9"/>
    <property type="match status" value="1"/>
</dbReference>
<dbReference type="FunFam" id="3.40.5.10:FF:000001">
    <property type="entry name" value="50S ribosomal protein L9"/>
    <property type="match status" value="1"/>
</dbReference>
<dbReference type="Gene3D" id="3.10.430.100">
    <property type="entry name" value="Ribosomal protein L9, C-terminal domain"/>
    <property type="match status" value="1"/>
</dbReference>
<dbReference type="Gene3D" id="3.40.5.10">
    <property type="entry name" value="Ribosomal protein L9, N-terminal domain"/>
    <property type="match status" value="1"/>
</dbReference>
<dbReference type="HAMAP" id="MF_00503">
    <property type="entry name" value="Ribosomal_bL9"/>
    <property type="match status" value="1"/>
</dbReference>
<dbReference type="InterPro" id="IPR000244">
    <property type="entry name" value="Ribosomal_bL9"/>
</dbReference>
<dbReference type="InterPro" id="IPR009027">
    <property type="entry name" value="Ribosomal_bL9/RNase_H1_N"/>
</dbReference>
<dbReference type="InterPro" id="IPR020594">
    <property type="entry name" value="Ribosomal_bL9_bac/chp"/>
</dbReference>
<dbReference type="InterPro" id="IPR020069">
    <property type="entry name" value="Ribosomal_bL9_C"/>
</dbReference>
<dbReference type="InterPro" id="IPR036791">
    <property type="entry name" value="Ribosomal_bL9_C_sf"/>
</dbReference>
<dbReference type="InterPro" id="IPR020070">
    <property type="entry name" value="Ribosomal_bL9_N"/>
</dbReference>
<dbReference type="InterPro" id="IPR036935">
    <property type="entry name" value="Ribosomal_bL9_N_sf"/>
</dbReference>
<dbReference type="NCBIfam" id="TIGR00158">
    <property type="entry name" value="L9"/>
    <property type="match status" value="1"/>
</dbReference>
<dbReference type="PANTHER" id="PTHR21368">
    <property type="entry name" value="50S RIBOSOMAL PROTEIN L9"/>
    <property type="match status" value="1"/>
</dbReference>
<dbReference type="Pfam" id="PF03948">
    <property type="entry name" value="Ribosomal_L9_C"/>
    <property type="match status" value="1"/>
</dbReference>
<dbReference type="Pfam" id="PF01281">
    <property type="entry name" value="Ribosomal_L9_N"/>
    <property type="match status" value="1"/>
</dbReference>
<dbReference type="SUPFAM" id="SSF55658">
    <property type="entry name" value="L9 N-domain-like"/>
    <property type="match status" value="1"/>
</dbReference>
<dbReference type="SUPFAM" id="SSF55653">
    <property type="entry name" value="Ribosomal protein L9 C-domain"/>
    <property type="match status" value="1"/>
</dbReference>
<dbReference type="PROSITE" id="PS00651">
    <property type="entry name" value="RIBOSOMAL_L9"/>
    <property type="match status" value="1"/>
</dbReference>
<comment type="function">
    <text evidence="1">Binds to the 23S rRNA.</text>
</comment>
<comment type="similarity">
    <text evidence="1">Belongs to the bacterial ribosomal protein bL9 family.</text>
</comment>
<keyword id="KW-0687">Ribonucleoprotein</keyword>
<keyword id="KW-0689">Ribosomal protein</keyword>
<keyword id="KW-0694">RNA-binding</keyword>
<keyword id="KW-0699">rRNA-binding</keyword>
<evidence type="ECO:0000255" key="1">
    <source>
        <dbReference type="HAMAP-Rule" id="MF_00503"/>
    </source>
</evidence>
<evidence type="ECO:0000305" key="2"/>
<name>RL9_XANC8</name>
<proteinExistence type="inferred from homology"/>
<protein>
    <recommendedName>
        <fullName evidence="1">Large ribosomal subunit protein bL9</fullName>
    </recommendedName>
    <alternativeName>
        <fullName evidence="2">50S ribosomal protein L9</fullName>
    </alternativeName>
</protein>
<reference key="1">
    <citation type="journal article" date="2005" name="Genome Res.">
        <title>Comparative and functional genomic analyses of the pathogenicity of phytopathogen Xanthomonas campestris pv. campestris.</title>
        <authorList>
            <person name="Qian W."/>
            <person name="Jia Y."/>
            <person name="Ren S.-X."/>
            <person name="He Y.-Q."/>
            <person name="Feng J.-X."/>
            <person name="Lu L.-F."/>
            <person name="Sun Q."/>
            <person name="Ying G."/>
            <person name="Tang D.-J."/>
            <person name="Tang H."/>
            <person name="Wu W."/>
            <person name="Hao P."/>
            <person name="Wang L."/>
            <person name="Jiang B.-L."/>
            <person name="Zeng S."/>
            <person name="Gu W.-Y."/>
            <person name="Lu G."/>
            <person name="Rong L."/>
            <person name="Tian Y."/>
            <person name="Yao Z."/>
            <person name="Fu G."/>
            <person name="Chen B."/>
            <person name="Fang R."/>
            <person name="Qiang B."/>
            <person name="Chen Z."/>
            <person name="Zhao G.-P."/>
            <person name="Tang J.-L."/>
            <person name="He C."/>
        </authorList>
    </citation>
    <scope>NUCLEOTIDE SEQUENCE [LARGE SCALE GENOMIC DNA]</scope>
    <source>
        <strain>8004</strain>
    </source>
</reference>
<sequence length="149" mass="15699">MDLILLQKVTNLGNLGDKVSVKPGYGRNFLVPQGKAVPATAANVEAFETKRAEYEAKANTILADAQSRATKFEGASVTIGAHASTEGKLYGSVGPRDIAEAFTAAGLPLEKSEVILGEGAFRNVGEYDVVLHLHADVETTVKVIVESDA</sequence>
<accession>Q4UTA5</accession>